<dbReference type="EMBL" id="AE004439">
    <property type="protein sequence ID" value="AAK02615.1"/>
    <property type="molecule type" value="Genomic_DNA"/>
</dbReference>
<dbReference type="RefSeq" id="WP_005721986.1">
    <property type="nucleotide sequence ID" value="NC_002663.1"/>
</dbReference>
<dbReference type="SMR" id="Q9CNA2"/>
<dbReference type="STRING" id="272843.PM0531"/>
<dbReference type="EnsemblBacteria" id="AAK02615">
    <property type="protein sequence ID" value="AAK02615"/>
    <property type="gene ID" value="PM0531"/>
</dbReference>
<dbReference type="KEGG" id="pmu:PM0531"/>
<dbReference type="PATRIC" id="fig|272843.6.peg.538"/>
<dbReference type="HOGENOM" id="CLU_1584297_0_0_6"/>
<dbReference type="OrthoDB" id="9805698at2"/>
<dbReference type="Proteomes" id="UP000000809">
    <property type="component" value="Chromosome"/>
</dbReference>
<dbReference type="Gene3D" id="3.40.50.300">
    <property type="entry name" value="P-loop containing nucleotide triphosphate hydrolases"/>
    <property type="match status" value="1"/>
</dbReference>
<dbReference type="InterPro" id="IPR027417">
    <property type="entry name" value="P-loop_NTPase"/>
</dbReference>
<dbReference type="SUPFAM" id="SSF52540">
    <property type="entry name" value="P-loop containing nucleoside triphosphate hydrolases"/>
    <property type="match status" value="1"/>
</dbReference>
<proteinExistence type="predicted"/>
<keyword id="KW-1185">Reference proteome</keyword>
<name>Y531_PASMU</name>
<gene>
    <name type="ordered locus">PM0531</name>
</gene>
<protein>
    <recommendedName>
        <fullName>Uncharacterized protein PM0531</fullName>
    </recommendedName>
</protein>
<sequence length="179" mass="20691">MQTLLIIRGHSGSGKSTFALQKMAEFKQNFTEGVLFHVENDHFLRENGEYHWTVERFQQAKQLAQQQLADALNYCVENPQHDVCIVLSNVGGNAKEIEKVVARATSYGLHTEVYRLQNFFPNTHGVDAQVVYEMYLHLCDQPVQNEILLPPIQPMTKAICREIKKLQAQKRKNRYTKKM</sequence>
<reference key="1">
    <citation type="journal article" date="2001" name="Proc. Natl. Acad. Sci. U.S.A.">
        <title>Complete genomic sequence of Pasteurella multocida Pm70.</title>
        <authorList>
            <person name="May B.J."/>
            <person name="Zhang Q."/>
            <person name="Li L.L."/>
            <person name="Paustian M.L."/>
            <person name="Whittam T.S."/>
            <person name="Kapur V."/>
        </authorList>
    </citation>
    <scope>NUCLEOTIDE SEQUENCE [LARGE SCALE GENOMIC DNA]</scope>
    <source>
        <strain>Pm70</strain>
    </source>
</reference>
<organism>
    <name type="scientific">Pasteurella multocida (strain Pm70)</name>
    <dbReference type="NCBI Taxonomy" id="272843"/>
    <lineage>
        <taxon>Bacteria</taxon>
        <taxon>Pseudomonadati</taxon>
        <taxon>Pseudomonadota</taxon>
        <taxon>Gammaproteobacteria</taxon>
        <taxon>Pasteurellales</taxon>
        <taxon>Pasteurellaceae</taxon>
        <taxon>Pasteurella</taxon>
    </lineage>
</organism>
<accession>Q9CNA2</accession>
<feature type="chain" id="PRO_0000216298" description="Uncharacterized protein PM0531">
    <location>
        <begin position="1"/>
        <end position="179"/>
    </location>
</feature>